<comment type="similarity">
    <text evidence="1">Belongs to the bacterial ribosomal protein bL27 family.</text>
</comment>
<organism>
    <name type="scientific">Buchnera aphidicola subsp. Acyrthosiphon pisum (strain APS)</name>
    <name type="common">Acyrthosiphon pisum symbiotic bacterium</name>
    <dbReference type="NCBI Taxonomy" id="107806"/>
    <lineage>
        <taxon>Bacteria</taxon>
        <taxon>Pseudomonadati</taxon>
        <taxon>Pseudomonadota</taxon>
        <taxon>Gammaproteobacteria</taxon>
        <taxon>Enterobacterales</taxon>
        <taxon>Erwiniaceae</taxon>
        <taxon>Buchnera</taxon>
    </lineage>
</organism>
<proteinExistence type="inferred from homology"/>
<name>RL27_BUCAI</name>
<gene>
    <name evidence="1" type="primary">rpmA</name>
    <name type="ordered locus">BU388</name>
</gene>
<accession>P57468</accession>
<reference key="1">
    <citation type="journal article" date="2000" name="Nature">
        <title>Genome sequence of the endocellular bacterial symbiont of aphids Buchnera sp. APS.</title>
        <authorList>
            <person name="Shigenobu S."/>
            <person name="Watanabe H."/>
            <person name="Hattori M."/>
            <person name="Sakaki Y."/>
            <person name="Ishikawa H."/>
        </authorList>
    </citation>
    <scope>NUCLEOTIDE SEQUENCE [LARGE SCALE GENOMIC DNA]</scope>
    <source>
        <strain>APS</strain>
    </source>
</reference>
<protein>
    <recommendedName>
        <fullName evidence="1">Large ribosomal subunit protein bL27</fullName>
    </recommendedName>
    <alternativeName>
        <fullName evidence="2">50S ribosomal protein L27</fullName>
    </alternativeName>
</protein>
<sequence>MAHKKAGGSTRNGRDSNAQRLGVKCFGGQLISAGSIIVKQRGTKFHPGKNVGCGKDHTIFAIVKGKVEFKKKGLKKRTYINIIN</sequence>
<evidence type="ECO:0000255" key="1">
    <source>
        <dbReference type="HAMAP-Rule" id="MF_00539"/>
    </source>
</evidence>
<evidence type="ECO:0000305" key="2"/>
<keyword id="KW-1185">Reference proteome</keyword>
<keyword id="KW-0687">Ribonucleoprotein</keyword>
<keyword id="KW-0689">Ribosomal protein</keyword>
<feature type="chain" id="PRO_0000181059" description="Large ribosomal subunit protein bL27">
    <location>
        <begin position="1"/>
        <end position="84"/>
    </location>
</feature>
<dbReference type="EMBL" id="BA000003">
    <property type="protein sequence ID" value="BAB13091.1"/>
    <property type="molecule type" value="Genomic_DNA"/>
</dbReference>
<dbReference type="RefSeq" id="NP_240205.1">
    <property type="nucleotide sequence ID" value="NC_002528.1"/>
</dbReference>
<dbReference type="RefSeq" id="WP_009874345.1">
    <property type="nucleotide sequence ID" value="NZ_AP036055.1"/>
</dbReference>
<dbReference type="SMR" id="P57468"/>
<dbReference type="STRING" id="563178.BUAP5A_381"/>
<dbReference type="EnsemblBacteria" id="BAB13091">
    <property type="protein sequence ID" value="BAB13091"/>
    <property type="gene ID" value="BAB13091"/>
</dbReference>
<dbReference type="KEGG" id="buc:BU388"/>
<dbReference type="PATRIC" id="fig|107806.10.peg.402"/>
<dbReference type="eggNOG" id="COG0211">
    <property type="taxonomic scope" value="Bacteria"/>
</dbReference>
<dbReference type="HOGENOM" id="CLU_095424_4_1_6"/>
<dbReference type="Proteomes" id="UP000001806">
    <property type="component" value="Chromosome"/>
</dbReference>
<dbReference type="GO" id="GO:0022625">
    <property type="term" value="C:cytosolic large ribosomal subunit"/>
    <property type="evidence" value="ECO:0007669"/>
    <property type="project" value="TreeGrafter"/>
</dbReference>
<dbReference type="GO" id="GO:0003735">
    <property type="term" value="F:structural constituent of ribosome"/>
    <property type="evidence" value="ECO:0007669"/>
    <property type="project" value="InterPro"/>
</dbReference>
<dbReference type="GO" id="GO:0006412">
    <property type="term" value="P:translation"/>
    <property type="evidence" value="ECO:0007669"/>
    <property type="project" value="UniProtKB-UniRule"/>
</dbReference>
<dbReference type="FunFam" id="2.40.50.100:FF:000020">
    <property type="entry name" value="50S ribosomal protein L27"/>
    <property type="match status" value="1"/>
</dbReference>
<dbReference type="Gene3D" id="2.40.50.100">
    <property type="match status" value="1"/>
</dbReference>
<dbReference type="HAMAP" id="MF_00539">
    <property type="entry name" value="Ribosomal_bL27"/>
    <property type="match status" value="1"/>
</dbReference>
<dbReference type="InterPro" id="IPR001684">
    <property type="entry name" value="Ribosomal_bL27"/>
</dbReference>
<dbReference type="NCBIfam" id="TIGR00062">
    <property type="entry name" value="L27"/>
    <property type="match status" value="1"/>
</dbReference>
<dbReference type="PANTHER" id="PTHR15893:SF0">
    <property type="entry name" value="LARGE RIBOSOMAL SUBUNIT PROTEIN BL27M"/>
    <property type="match status" value="1"/>
</dbReference>
<dbReference type="PANTHER" id="PTHR15893">
    <property type="entry name" value="RIBOSOMAL PROTEIN L27"/>
    <property type="match status" value="1"/>
</dbReference>
<dbReference type="Pfam" id="PF01016">
    <property type="entry name" value="Ribosomal_L27"/>
    <property type="match status" value="1"/>
</dbReference>
<dbReference type="PRINTS" id="PR00063">
    <property type="entry name" value="RIBOSOMALL27"/>
</dbReference>
<dbReference type="SUPFAM" id="SSF110324">
    <property type="entry name" value="Ribosomal L27 protein-like"/>
    <property type="match status" value="1"/>
</dbReference>